<comment type="subunit">
    <text evidence="1">Monomer.</text>
</comment>
<comment type="subcellular location">
    <subcellularLocation>
        <location evidence="1">Nucleus envelope</location>
    </subcellularLocation>
    <subcellularLocation>
        <location evidence="2">Presynapse</location>
    </subcellularLocation>
    <subcellularLocation>
        <location evidence="2">Cell projection</location>
        <location evidence="2">Axon</location>
    </subcellularLocation>
    <subcellularLocation>
        <location evidence="2">Perikaryon</location>
    </subcellularLocation>
    <subcellularLocation>
        <location evidence="2">Cell projection</location>
        <location evidence="2">Dendrite</location>
    </subcellularLocation>
    <subcellularLocation>
        <location evidence="2">Cytoplasmic vesicle</location>
        <location evidence="2">Secretory vesicle</location>
        <location evidence="2">Synaptic vesicle</location>
    </subcellularLocation>
    <text evidence="2">Detected primarily at presynaptic sites on axons, and to a lesser degree in soma and dendrites. Not detected at post-synaptic sites.</text>
</comment>
<comment type="tissue specificity">
    <text evidence="2">Detected at synapses in the stratum lucidum in the hippocampus CA3 region (at protein level).</text>
</comment>
<comment type="similarity">
    <text evidence="3">Belongs to the rogdi family.</text>
</comment>
<name>ROGDI_RAT</name>
<protein>
    <recommendedName>
        <fullName>Protein rogdi homolog</fullName>
    </recommendedName>
</protein>
<proteinExistence type="evidence at protein level"/>
<organism>
    <name type="scientific">Rattus norvegicus</name>
    <name type="common">Rat</name>
    <dbReference type="NCBI Taxonomy" id="10116"/>
    <lineage>
        <taxon>Eukaryota</taxon>
        <taxon>Metazoa</taxon>
        <taxon>Chordata</taxon>
        <taxon>Craniata</taxon>
        <taxon>Vertebrata</taxon>
        <taxon>Euteleostomi</taxon>
        <taxon>Mammalia</taxon>
        <taxon>Eutheria</taxon>
        <taxon>Euarchontoglires</taxon>
        <taxon>Glires</taxon>
        <taxon>Rodentia</taxon>
        <taxon>Myomorpha</taxon>
        <taxon>Muroidea</taxon>
        <taxon>Muridae</taxon>
        <taxon>Murinae</taxon>
        <taxon>Rattus</taxon>
    </lineage>
</organism>
<sequence>MATAMAASAAERAVLEEEFRWLLHAEVHAVLRQLQDILKEASLRFTLPGPSTEGPAKQENFILGSCGTDQVKGVLTLQGDALSQADVNLKMPRNNQLLHFAFREDKQWKLQQIQDARNHVSQAIYLLANRDESYQFKTGAEVLKLMDAVMLQLTRARNRLTTPATLTLPEIAASGLTRMFAPTLPSDLLVNVYINLNKLCLTVYQLHTLQPTSTKNFRPAGGAVLHSPGAMFEWGSQRLEVSHVHKVECVIPWLNDALVYFTVSLQLCQQLKDKISVFSSYWSSRPF</sequence>
<feature type="initiator methionine" description="Removed" evidence="1">
    <location>
        <position position="1"/>
    </location>
</feature>
<feature type="chain" id="PRO_0000315667" description="Protein rogdi homolog">
    <location>
        <begin position="2"/>
        <end position="287"/>
    </location>
</feature>
<feature type="modified residue" description="N-acetylalanine" evidence="1">
    <location>
        <position position="2"/>
    </location>
</feature>
<gene>
    <name type="primary">Rogdi</name>
</gene>
<evidence type="ECO:0000250" key="1">
    <source>
        <dbReference type="UniProtKB" id="Q9GZN7"/>
    </source>
</evidence>
<evidence type="ECO:0000269" key="2">
    <source>
    </source>
</evidence>
<evidence type="ECO:0000305" key="3"/>
<accession>Q4V7D2</accession>
<keyword id="KW-0007">Acetylation</keyword>
<keyword id="KW-0966">Cell projection</keyword>
<keyword id="KW-0968">Cytoplasmic vesicle</keyword>
<keyword id="KW-0539">Nucleus</keyword>
<keyword id="KW-1185">Reference proteome</keyword>
<keyword id="KW-0770">Synapse</keyword>
<reference key="1">
    <citation type="journal article" date="2004" name="Genome Res.">
        <title>The status, quality, and expansion of the NIH full-length cDNA project: the Mammalian Gene Collection (MGC).</title>
        <authorList>
            <consortium name="The MGC Project Team"/>
        </authorList>
    </citation>
    <scope>NUCLEOTIDE SEQUENCE [LARGE SCALE MRNA]</scope>
    <source>
        <tissue>Testis</tissue>
    </source>
</reference>
<reference key="2">
    <citation type="journal article" date="2017" name="Sci. Rep.">
        <title>The Kohlschuetter-Toenz syndrome associated gene Rogdi encodes a novel presynaptic protein.</title>
        <authorList>
            <person name="Riemann D."/>
            <person name="Wallrafen R."/>
            <person name="Dresbach T."/>
        </authorList>
    </citation>
    <scope>SUBCELLULAR LOCATION</scope>
    <scope>TISSUE SPECIFICITY</scope>
</reference>
<dbReference type="EMBL" id="BC098001">
    <property type="protein sequence ID" value="AAH98001.1"/>
    <property type="molecule type" value="mRNA"/>
</dbReference>
<dbReference type="RefSeq" id="NP_001020035.1">
    <property type="nucleotide sequence ID" value="NM_001024864.1"/>
</dbReference>
<dbReference type="SMR" id="Q4V7D2"/>
<dbReference type="BioGRID" id="251991">
    <property type="interactions" value="1"/>
</dbReference>
<dbReference type="FunCoup" id="Q4V7D2">
    <property type="interactions" value="2041"/>
</dbReference>
<dbReference type="STRING" id="10116.ENSRNOP00000004176"/>
<dbReference type="PhosphoSitePlus" id="Q4V7D2"/>
<dbReference type="PaxDb" id="10116-ENSRNOP00000004176"/>
<dbReference type="Ensembl" id="ENSRNOT00000004176.6">
    <property type="protein sequence ID" value="ENSRNOP00000004176.5"/>
    <property type="gene ID" value="ENSRNOG00000003125.6"/>
</dbReference>
<dbReference type="GeneID" id="287061"/>
<dbReference type="KEGG" id="rno:287061"/>
<dbReference type="UCSC" id="RGD:1560021">
    <property type="organism name" value="rat"/>
</dbReference>
<dbReference type="AGR" id="RGD:1560021"/>
<dbReference type="CTD" id="79641"/>
<dbReference type="RGD" id="1560021">
    <property type="gene designation" value="Rogdi"/>
</dbReference>
<dbReference type="eggNOG" id="KOG3992">
    <property type="taxonomic scope" value="Eukaryota"/>
</dbReference>
<dbReference type="GeneTree" id="ENSGT00390000007164"/>
<dbReference type="HOGENOM" id="CLU_062094_0_1_1"/>
<dbReference type="InParanoid" id="Q4V7D2"/>
<dbReference type="OMA" id="NILMECA"/>
<dbReference type="OrthoDB" id="66510at2759"/>
<dbReference type="PhylomeDB" id="Q4V7D2"/>
<dbReference type="TreeFam" id="TF105859"/>
<dbReference type="PRO" id="PR:Q4V7D2"/>
<dbReference type="Proteomes" id="UP000002494">
    <property type="component" value="Chromosome 10"/>
</dbReference>
<dbReference type="Bgee" id="ENSRNOG00000003125">
    <property type="expression patterns" value="Expressed in kidney and 20 other cell types or tissues"/>
</dbReference>
<dbReference type="GO" id="GO:0030424">
    <property type="term" value="C:axon"/>
    <property type="evidence" value="ECO:0007669"/>
    <property type="project" value="UniProtKB-SubCell"/>
</dbReference>
<dbReference type="GO" id="GO:0030425">
    <property type="term" value="C:dendrite"/>
    <property type="evidence" value="ECO:0007669"/>
    <property type="project" value="UniProtKB-SubCell"/>
</dbReference>
<dbReference type="GO" id="GO:0098686">
    <property type="term" value="C:hippocampal mossy fiber to CA3 synapse"/>
    <property type="evidence" value="ECO:0000314"/>
    <property type="project" value="SynGO"/>
</dbReference>
<dbReference type="GO" id="GO:0005635">
    <property type="term" value="C:nuclear envelope"/>
    <property type="evidence" value="ECO:0000266"/>
    <property type="project" value="RGD"/>
</dbReference>
<dbReference type="GO" id="GO:0043204">
    <property type="term" value="C:perikaryon"/>
    <property type="evidence" value="ECO:0007669"/>
    <property type="project" value="UniProtKB-SubCell"/>
</dbReference>
<dbReference type="GO" id="GO:0098793">
    <property type="term" value="C:presynapse"/>
    <property type="evidence" value="ECO:0000314"/>
    <property type="project" value="SynGO"/>
</dbReference>
<dbReference type="GO" id="GO:0043291">
    <property type="term" value="C:RAVE complex"/>
    <property type="evidence" value="ECO:0000318"/>
    <property type="project" value="GO_Central"/>
</dbReference>
<dbReference type="GO" id="GO:0008021">
    <property type="term" value="C:synaptic vesicle"/>
    <property type="evidence" value="ECO:0007669"/>
    <property type="project" value="UniProtKB-SubCell"/>
</dbReference>
<dbReference type="GO" id="GO:0097186">
    <property type="term" value="P:amelogenesis"/>
    <property type="evidence" value="ECO:0000266"/>
    <property type="project" value="RGD"/>
</dbReference>
<dbReference type="GO" id="GO:0030282">
    <property type="term" value="P:bone mineralization"/>
    <property type="evidence" value="ECO:0000266"/>
    <property type="project" value="RGD"/>
</dbReference>
<dbReference type="GO" id="GO:0007420">
    <property type="term" value="P:brain development"/>
    <property type="evidence" value="ECO:0000266"/>
    <property type="project" value="RGD"/>
</dbReference>
<dbReference type="GO" id="GO:0048512">
    <property type="term" value="P:circadian behavior"/>
    <property type="evidence" value="ECO:0000266"/>
    <property type="project" value="RGD"/>
</dbReference>
<dbReference type="GO" id="GO:0070166">
    <property type="term" value="P:enamel mineralization"/>
    <property type="evidence" value="ECO:0000266"/>
    <property type="project" value="RGD"/>
</dbReference>
<dbReference type="GO" id="GO:0010467">
    <property type="term" value="P:gene expression"/>
    <property type="evidence" value="ECO:0000266"/>
    <property type="project" value="RGD"/>
</dbReference>
<dbReference type="GO" id="GO:0030097">
    <property type="term" value="P:hemopoiesis"/>
    <property type="evidence" value="ECO:0000266"/>
    <property type="project" value="RGD"/>
</dbReference>
<dbReference type="GO" id="GO:0040011">
    <property type="term" value="P:locomotion"/>
    <property type="evidence" value="ECO:0000266"/>
    <property type="project" value="RGD"/>
</dbReference>
<dbReference type="GO" id="GO:0045475">
    <property type="term" value="P:locomotor rhythm"/>
    <property type="evidence" value="ECO:0000266"/>
    <property type="project" value="RGD"/>
</dbReference>
<dbReference type="GO" id="GO:0007626">
    <property type="term" value="P:locomotory behavior"/>
    <property type="evidence" value="ECO:0000266"/>
    <property type="project" value="RGD"/>
</dbReference>
<dbReference type="GO" id="GO:0007613">
    <property type="term" value="P:memory"/>
    <property type="evidence" value="ECO:0000266"/>
    <property type="project" value="RGD"/>
</dbReference>
<dbReference type="GO" id="GO:0050877">
    <property type="term" value="P:nervous system process"/>
    <property type="evidence" value="ECO:0000266"/>
    <property type="project" value="RGD"/>
</dbReference>
<dbReference type="GO" id="GO:0022008">
    <property type="term" value="P:neurogenesis"/>
    <property type="evidence" value="ECO:0000266"/>
    <property type="project" value="RGD"/>
</dbReference>
<dbReference type="GO" id="GO:0050905">
    <property type="term" value="P:neuromuscular process"/>
    <property type="evidence" value="ECO:0000266"/>
    <property type="project" value="RGD"/>
</dbReference>
<dbReference type="GO" id="GO:0042475">
    <property type="term" value="P:odontogenesis of dentin-containing tooth"/>
    <property type="evidence" value="ECO:0000266"/>
    <property type="project" value="RGD"/>
</dbReference>
<dbReference type="GO" id="GO:0045851">
    <property type="term" value="P:pH reduction"/>
    <property type="evidence" value="ECO:0000266"/>
    <property type="project" value="RGD"/>
</dbReference>
<dbReference type="GO" id="GO:0008284">
    <property type="term" value="P:positive regulation of cell population proliferation"/>
    <property type="evidence" value="ECO:0000266"/>
    <property type="project" value="RGD"/>
</dbReference>
<dbReference type="GO" id="GO:0006885">
    <property type="term" value="P:regulation of pH"/>
    <property type="evidence" value="ECO:0000266"/>
    <property type="project" value="RGD"/>
</dbReference>
<dbReference type="GO" id="GO:0009410">
    <property type="term" value="P:response to xenobiotic stimulus"/>
    <property type="evidence" value="ECO:0000266"/>
    <property type="project" value="RGD"/>
</dbReference>
<dbReference type="InterPro" id="IPR028241">
    <property type="entry name" value="RAVE2/Rogdi"/>
</dbReference>
<dbReference type="PANTHER" id="PTHR13618">
    <property type="entry name" value="LEUCINE ZIPPER CONTAINING TRANSCRIPTION FACTOR LZF1"/>
    <property type="match status" value="1"/>
</dbReference>
<dbReference type="PANTHER" id="PTHR13618:SF1">
    <property type="entry name" value="PROTEIN ROGDI HOMOLOG"/>
    <property type="match status" value="1"/>
</dbReference>
<dbReference type="Pfam" id="PF10259">
    <property type="entry name" value="Rogdi_lz"/>
    <property type="match status" value="1"/>
</dbReference>